<sequence>MTVETFKPKQTTTLDIPVKTLEAASTNAVTTGNRIGFVSLGCPKNLVDSERILTQLRIDGYEVTNSYDNADLVIVNTCGFIDAAVEESLDAVREALEENGKVIVTGCLGAKENQIREVHPDVLEITGPHSYEAVLKHVHKYVPKPEHNPFTSLIPQTGVKLTPKHYAYLKISEGCDNRCTFCIIPSLRGDLDSRPAGSILDEAKRLVESGVQEILVVSQDTSAYGKDKGGRTDFWNGMPVKQDITSLARQLGKMGAWVRLHYIYPYPWVDDLIPLMAEGLILPYLDIPMQHASPRILKMMKRPGRVDRQLEAIQRWREICPDLVIRSTFIVGFPGETEEDFQILLDFLKEARLDRVGCFKYSEVDGAVANTIAELISEDVKEDRYHRFMEVQAEISAERLARFVGRTLDILIDDVDEEGAIGRSFADAPEIDGMVFINGETELEPGMLVRARITHSDEHDLWAEVVDADTQD</sequence>
<feature type="chain" id="PRO_0000375001" description="Ribosomal protein uS12 methylthiotransferase RimO">
    <location>
        <begin position="1"/>
        <end position="472"/>
    </location>
</feature>
<feature type="domain" description="MTTase N-terminal" evidence="1">
    <location>
        <begin position="33"/>
        <end position="143"/>
    </location>
</feature>
<feature type="domain" description="Radical SAM core" evidence="2">
    <location>
        <begin position="161"/>
        <end position="398"/>
    </location>
</feature>
<feature type="domain" description="TRAM" evidence="1">
    <location>
        <begin position="401"/>
        <end position="467"/>
    </location>
</feature>
<feature type="binding site" evidence="1">
    <location>
        <position position="42"/>
    </location>
    <ligand>
        <name>[4Fe-4S] cluster</name>
        <dbReference type="ChEBI" id="CHEBI:49883"/>
        <label>1</label>
    </ligand>
</feature>
<feature type="binding site" evidence="1">
    <location>
        <position position="78"/>
    </location>
    <ligand>
        <name>[4Fe-4S] cluster</name>
        <dbReference type="ChEBI" id="CHEBI:49883"/>
        <label>1</label>
    </ligand>
</feature>
<feature type="binding site" evidence="1">
    <location>
        <position position="107"/>
    </location>
    <ligand>
        <name>[4Fe-4S] cluster</name>
        <dbReference type="ChEBI" id="CHEBI:49883"/>
        <label>1</label>
    </ligand>
</feature>
<feature type="binding site" evidence="1">
    <location>
        <position position="175"/>
    </location>
    <ligand>
        <name>[4Fe-4S] cluster</name>
        <dbReference type="ChEBI" id="CHEBI:49883"/>
        <label>2</label>
        <note>4Fe-4S-S-AdoMet</note>
    </ligand>
</feature>
<feature type="binding site" evidence="1">
    <location>
        <position position="179"/>
    </location>
    <ligand>
        <name>[4Fe-4S] cluster</name>
        <dbReference type="ChEBI" id="CHEBI:49883"/>
        <label>2</label>
        <note>4Fe-4S-S-AdoMet</note>
    </ligand>
</feature>
<feature type="binding site" evidence="1">
    <location>
        <position position="182"/>
    </location>
    <ligand>
        <name>[4Fe-4S] cluster</name>
        <dbReference type="ChEBI" id="CHEBI:49883"/>
        <label>2</label>
        <note>4Fe-4S-S-AdoMet</note>
    </ligand>
</feature>
<dbReference type="EC" id="2.8.4.4" evidence="1"/>
<dbReference type="EMBL" id="CP000753">
    <property type="protein sequence ID" value="ABS06685.1"/>
    <property type="molecule type" value="Genomic_DNA"/>
</dbReference>
<dbReference type="RefSeq" id="WP_012088137.1">
    <property type="nucleotide sequence ID" value="NC_009665.1"/>
</dbReference>
<dbReference type="SMR" id="A6WIP6"/>
<dbReference type="KEGG" id="sbm:Shew185_0517"/>
<dbReference type="HOGENOM" id="CLU_018697_0_0_6"/>
<dbReference type="GO" id="GO:0005829">
    <property type="term" value="C:cytosol"/>
    <property type="evidence" value="ECO:0007669"/>
    <property type="project" value="TreeGrafter"/>
</dbReference>
<dbReference type="GO" id="GO:0051539">
    <property type="term" value="F:4 iron, 4 sulfur cluster binding"/>
    <property type="evidence" value="ECO:0007669"/>
    <property type="project" value="UniProtKB-UniRule"/>
</dbReference>
<dbReference type="GO" id="GO:0035599">
    <property type="term" value="F:aspartic acid methylthiotransferase activity"/>
    <property type="evidence" value="ECO:0007669"/>
    <property type="project" value="TreeGrafter"/>
</dbReference>
<dbReference type="GO" id="GO:0046872">
    <property type="term" value="F:metal ion binding"/>
    <property type="evidence" value="ECO:0007669"/>
    <property type="project" value="UniProtKB-KW"/>
</dbReference>
<dbReference type="GO" id="GO:0103039">
    <property type="term" value="F:protein methylthiotransferase activity"/>
    <property type="evidence" value="ECO:0007669"/>
    <property type="project" value="UniProtKB-EC"/>
</dbReference>
<dbReference type="GO" id="GO:0006400">
    <property type="term" value="P:tRNA modification"/>
    <property type="evidence" value="ECO:0007669"/>
    <property type="project" value="InterPro"/>
</dbReference>
<dbReference type="CDD" id="cd01335">
    <property type="entry name" value="Radical_SAM"/>
    <property type="match status" value="1"/>
</dbReference>
<dbReference type="FunFam" id="2.40.50.140:FF:000060">
    <property type="entry name" value="Ribosomal protein S12 methylthiotransferase RimO"/>
    <property type="match status" value="1"/>
</dbReference>
<dbReference type="FunFam" id="3.40.50.12160:FF:000002">
    <property type="entry name" value="Ribosomal protein S12 methylthiotransferase RimO"/>
    <property type="match status" value="1"/>
</dbReference>
<dbReference type="FunFam" id="3.80.30.20:FF:000001">
    <property type="entry name" value="tRNA-2-methylthio-N(6)-dimethylallyladenosine synthase 2"/>
    <property type="match status" value="1"/>
</dbReference>
<dbReference type="Gene3D" id="3.40.50.12160">
    <property type="entry name" value="Methylthiotransferase, N-terminal domain"/>
    <property type="match status" value="1"/>
</dbReference>
<dbReference type="Gene3D" id="2.40.50.140">
    <property type="entry name" value="Nucleic acid-binding proteins"/>
    <property type="match status" value="1"/>
</dbReference>
<dbReference type="Gene3D" id="3.80.30.20">
    <property type="entry name" value="tm_1862 like domain"/>
    <property type="match status" value="1"/>
</dbReference>
<dbReference type="HAMAP" id="MF_01865">
    <property type="entry name" value="MTTase_RimO"/>
    <property type="match status" value="1"/>
</dbReference>
<dbReference type="InterPro" id="IPR006638">
    <property type="entry name" value="Elp3/MiaA/NifB-like_rSAM"/>
</dbReference>
<dbReference type="InterPro" id="IPR005839">
    <property type="entry name" value="Methylthiotransferase"/>
</dbReference>
<dbReference type="InterPro" id="IPR020612">
    <property type="entry name" value="Methylthiotransferase_CS"/>
</dbReference>
<dbReference type="InterPro" id="IPR013848">
    <property type="entry name" value="Methylthiotransferase_N"/>
</dbReference>
<dbReference type="InterPro" id="IPR038135">
    <property type="entry name" value="Methylthiotransferase_N_sf"/>
</dbReference>
<dbReference type="InterPro" id="IPR012340">
    <property type="entry name" value="NA-bd_OB-fold"/>
</dbReference>
<dbReference type="InterPro" id="IPR005840">
    <property type="entry name" value="Ribosomal_uS12_MeSTrfase_RimO"/>
</dbReference>
<dbReference type="InterPro" id="IPR007197">
    <property type="entry name" value="rSAM"/>
</dbReference>
<dbReference type="InterPro" id="IPR023404">
    <property type="entry name" value="rSAM_horseshoe"/>
</dbReference>
<dbReference type="InterPro" id="IPR002792">
    <property type="entry name" value="TRAM_dom"/>
</dbReference>
<dbReference type="NCBIfam" id="TIGR01125">
    <property type="entry name" value="30S ribosomal protein S12 methylthiotransferase RimO"/>
    <property type="match status" value="1"/>
</dbReference>
<dbReference type="NCBIfam" id="TIGR00089">
    <property type="entry name" value="MiaB/RimO family radical SAM methylthiotransferase"/>
    <property type="match status" value="1"/>
</dbReference>
<dbReference type="PANTHER" id="PTHR43837">
    <property type="entry name" value="RIBOSOMAL PROTEIN S12 METHYLTHIOTRANSFERASE RIMO"/>
    <property type="match status" value="1"/>
</dbReference>
<dbReference type="PANTHER" id="PTHR43837:SF1">
    <property type="entry name" value="RIBOSOMAL PROTEIN US12 METHYLTHIOTRANSFERASE RIMO"/>
    <property type="match status" value="1"/>
</dbReference>
<dbReference type="Pfam" id="PF04055">
    <property type="entry name" value="Radical_SAM"/>
    <property type="match status" value="1"/>
</dbReference>
<dbReference type="Pfam" id="PF18693">
    <property type="entry name" value="TRAM_2"/>
    <property type="match status" value="1"/>
</dbReference>
<dbReference type="Pfam" id="PF00919">
    <property type="entry name" value="UPF0004"/>
    <property type="match status" value="1"/>
</dbReference>
<dbReference type="SFLD" id="SFLDG01082">
    <property type="entry name" value="B12-binding_domain_containing"/>
    <property type="match status" value="1"/>
</dbReference>
<dbReference type="SFLD" id="SFLDG01061">
    <property type="entry name" value="methylthiotransferase"/>
    <property type="match status" value="1"/>
</dbReference>
<dbReference type="SFLD" id="SFLDF00274">
    <property type="entry name" value="ribosomal_protein_S12_methylth"/>
    <property type="match status" value="1"/>
</dbReference>
<dbReference type="SMART" id="SM00729">
    <property type="entry name" value="Elp3"/>
    <property type="match status" value="1"/>
</dbReference>
<dbReference type="SUPFAM" id="SSF102114">
    <property type="entry name" value="Radical SAM enzymes"/>
    <property type="match status" value="1"/>
</dbReference>
<dbReference type="PROSITE" id="PS51449">
    <property type="entry name" value="MTTASE_N"/>
    <property type="match status" value="1"/>
</dbReference>
<dbReference type="PROSITE" id="PS01278">
    <property type="entry name" value="MTTASE_RADICAL"/>
    <property type="match status" value="1"/>
</dbReference>
<dbReference type="PROSITE" id="PS51918">
    <property type="entry name" value="RADICAL_SAM"/>
    <property type="match status" value="1"/>
</dbReference>
<dbReference type="PROSITE" id="PS50926">
    <property type="entry name" value="TRAM"/>
    <property type="match status" value="1"/>
</dbReference>
<evidence type="ECO:0000255" key="1">
    <source>
        <dbReference type="HAMAP-Rule" id="MF_01865"/>
    </source>
</evidence>
<evidence type="ECO:0000255" key="2">
    <source>
        <dbReference type="PROSITE-ProRule" id="PRU01266"/>
    </source>
</evidence>
<name>RIMO_SHEB8</name>
<comment type="function">
    <text evidence="1">Catalyzes the methylthiolation of an aspartic acid residue of ribosomal protein uS12.</text>
</comment>
<comment type="catalytic activity">
    <reaction evidence="1">
        <text>L-aspartate(89)-[ribosomal protein uS12]-hydrogen + (sulfur carrier)-SH + AH2 + 2 S-adenosyl-L-methionine = 3-methylsulfanyl-L-aspartate(89)-[ribosomal protein uS12]-hydrogen + (sulfur carrier)-H + 5'-deoxyadenosine + L-methionine + A + S-adenosyl-L-homocysteine + 2 H(+)</text>
        <dbReference type="Rhea" id="RHEA:37087"/>
        <dbReference type="Rhea" id="RHEA-COMP:10460"/>
        <dbReference type="Rhea" id="RHEA-COMP:10461"/>
        <dbReference type="Rhea" id="RHEA-COMP:14737"/>
        <dbReference type="Rhea" id="RHEA-COMP:14739"/>
        <dbReference type="ChEBI" id="CHEBI:13193"/>
        <dbReference type="ChEBI" id="CHEBI:15378"/>
        <dbReference type="ChEBI" id="CHEBI:17319"/>
        <dbReference type="ChEBI" id="CHEBI:17499"/>
        <dbReference type="ChEBI" id="CHEBI:29917"/>
        <dbReference type="ChEBI" id="CHEBI:29961"/>
        <dbReference type="ChEBI" id="CHEBI:57844"/>
        <dbReference type="ChEBI" id="CHEBI:57856"/>
        <dbReference type="ChEBI" id="CHEBI:59789"/>
        <dbReference type="ChEBI" id="CHEBI:64428"/>
        <dbReference type="ChEBI" id="CHEBI:73599"/>
        <dbReference type="EC" id="2.8.4.4"/>
    </reaction>
</comment>
<comment type="cofactor">
    <cofactor evidence="1">
        <name>[4Fe-4S] cluster</name>
        <dbReference type="ChEBI" id="CHEBI:49883"/>
    </cofactor>
    <text evidence="1">Binds 2 [4Fe-4S] clusters. One cluster is coordinated with 3 cysteines and an exchangeable S-adenosyl-L-methionine.</text>
</comment>
<comment type="subcellular location">
    <subcellularLocation>
        <location evidence="1">Cytoplasm</location>
    </subcellularLocation>
</comment>
<comment type="similarity">
    <text evidence="1">Belongs to the methylthiotransferase family. RimO subfamily.</text>
</comment>
<proteinExistence type="inferred from homology"/>
<gene>
    <name evidence="1" type="primary">rimO</name>
    <name type="ordered locus">Shew185_0517</name>
</gene>
<keyword id="KW-0004">4Fe-4S</keyword>
<keyword id="KW-0963">Cytoplasm</keyword>
<keyword id="KW-0408">Iron</keyword>
<keyword id="KW-0411">Iron-sulfur</keyword>
<keyword id="KW-0479">Metal-binding</keyword>
<keyword id="KW-0949">S-adenosyl-L-methionine</keyword>
<keyword id="KW-0808">Transferase</keyword>
<reference key="1">
    <citation type="submission" date="2007-07" db="EMBL/GenBank/DDBJ databases">
        <title>Complete sequence of chromosome of Shewanella baltica OS185.</title>
        <authorList>
            <consortium name="US DOE Joint Genome Institute"/>
            <person name="Copeland A."/>
            <person name="Lucas S."/>
            <person name="Lapidus A."/>
            <person name="Barry K."/>
            <person name="Glavina del Rio T."/>
            <person name="Dalin E."/>
            <person name="Tice H."/>
            <person name="Pitluck S."/>
            <person name="Sims D."/>
            <person name="Brettin T."/>
            <person name="Bruce D."/>
            <person name="Detter J.C."/>
            <person name="Han C."/>
            <person name="Schmutz J."/>
            <person name="Larimer F."/>
            <person name="Land M."/>
            <person name="Hauser L."/>
            <person name="Kyrpides N."/>
            <person name="Mikhailova N."/>
            <person name="Brettar I."/>
            <person name="Rodrigues J."/>
            <person name="Konstantinidis K."/>
            <person name="Tiedje J."/>
            <person name="Richardson P."/>
        </authorList>
    </citation>
    <scope>NUCLEOTIDE SEQUENCE [LARGE SCALE GENOMIC DNA]</scope>
    <source>
        <strain>OS185</strain>
    </source>
</reference>
<accession>A6WIP6</accession>
<organism>
    <name type="scientific">Shewanella baltica (strain OS185)</name>
    <dbReference type="NCBI Taxonomy" id="402882"/>
    <lineage>
        <taxon>Bacteria</taxon>
        <taxon>Pseudomonadati</taxon>
        <taxon>Pseudomonadota</taxon>
        <taxon>Gammaproteobacteria</taxon>
        <taxon>Alteromonadales</taxon>
        <taxon>Shewanellaceae</taxon>
        <taxon>Shewanella</taxon>
    </lineage>
</organism>
<protein>
    <recommendedName>
        <fullName evidence="1">Ribosomal protein uS12 methylthiotransferase RimO</fullName>
        <shortName evidence="1">uS12 MTTase</shortName>
        <shortName evidence="1">uS12 methylthiotransferase</shortName>
        <ecNumber evidence="1">2.8.4.4</ecNumber>
    </recommendedName>
    <alternativeName>
        <fullName evidence="1">Ribosomal protein uS12 (aspartate-C(3))-methylthiotransferase</fullName>
    </alternativeName>
    <alternativeName>
        <fullName evidence="1">Ribosome maturation factor RimO</fullName>
    </alternativeName>
</protein>